<comment type="function">
    <text evidence="3">Implicated in development of the cochlea.</text>
</comment>
<comment type="subunit">
    <text evidence="1">Interacts (via SIM domains) with SUMO1 and SUMO2.</text>
</comment>
<comment type="similarity">
    <text evidence="4">Belongs to the SOBP family.</text>
</comment>
<keyword id="KW-1017">Isopeptide bond</keyword>
<keyword id="KW-0479">Metal-binding</keyword>
<keyword id="KW-0597">Phosphoprotein</keyword>
<keyword id="KW-1185">Reference proteome</keyword>
<keyword id="KW-0677">Repeat</keyword>
<keyword id="KW-0832">Ubl conjugation</keyword>
<keyword id="KW-0862">Zinc</keyword>
<keyword id="KW-0863">Zinc-finger</keyword>
<proteinExistence type="evidence at transcript level"/>
<dbReference type="EMBL" id="DQ503410">
    <property type="protein sequence ID" value="ABF56058.1"/>
    <property type="molecule type" value="mRNA"/>
</dbReference>
<dbReference type="RefSeq" id="NP_001098110.1">
    <property type="nucleotide sequence ID" value="NM_001104640.2"/>
</dbReference>
<dbReference type="RefSeq" id="NP_001399039.1">
    <property type="nucleotide sequence ID" value="NM_001412110.1"/>
</dbReference>
<dbReference type="RefSeq" id="XP_006256636.1">
    <property type="nucleotide sequence ID" value="XM_006256574.3"/>
</dbReference>
<dbReference type="RefSeq" id="XP_063135245.1">
    <property type="nucleotide sequence ID" value="XM_063279175.1"/>
</dbReference>
<dbReference type="FunCoup" id="A7XYI6">
    <property type="interactions" value="1587"/>
</dbReference>
<dbReference type="STRING" id="10116.ENSRNOP00000000348"/>
<dbReference type="GlyGen" id="A7XYI6">
    <property type="glycosylation" value="1 site"/>
</dbReference>
<dbReference type="iPTMnet" id="A7XYI6"/>
<dbReference type="PhosphoSitePlus" id="A7XYI6"/>
<dbReference type="PaxDb" id="10116-ENSRNOP00000000348"/>
<dbReference type="Ensembl" id="ENSRNOT00000000348.7">
    <property type="protein sequence ID" value="ENSRNOP00000000348.5"/>
    <property type="gene ID" value="ENSRNOG00000000316.7"/>
</dbReference>
<dbReference type="GeneID" id="309860"/>
<dbReference type="KEGG" id="rno:309860"/>
<dbReference type="UCSC" id="RGD:1560479">
    <property type="organism name" value="rat"/>
</dbReference>
<dbReference type="AGR" id="RGD:1560479"/>
<dbReference type="CTD" id="55084"/>
<dbReference type="RGD" id="1560479">
    <property type="gene designation" value="Sobp"/>
</dbReference>
<dbReference type="eggNOG" id="ENOG502QZ8A">
    <property type="taxonomic scope" value="Eukaryota"/>
</dbReference>
<dbReference type="GeneTree" id="ENSGT00940000154164"/>
<dbReference type="HOGENOM" id="CLU_012732_0_0_1"/>
<dbReference type="InParanoid" id="A7XYI6"/>
<dbReference type="OMA" id="MAPCVIS"/>
<dbReference type="OrthoDB" id="6250723at2759"/>
<dbReference type="PhylomeDB" id="A7XYI6"/>
<dbReference type="PRO" id="PR:A7XYI6"/>
<dbReference type="Proteomes" id="UP000002494">
    <property type="component" value="Chromosome 20"/>
</dbReference>
<dbReference type="Bgee" id="ENSRNOG00000000316">
    <property type="expression patterns" value="Expressed in skeletal muscle tissue and 12 other cell types or tissues"/>
</dbReference>
<dbReference type="GO" id="GO:0005634">
    <property type="term" value="C:nucleus"/>
    <property type="evidence" value="ECO:0000266"/>
    <property type="project" value="RGD"/>
</dbReference>
<dbReference type="GO" id="GO:0032184">
    <property type="term" value="F:SUMO polymer binding"/>
    <property type="evidence" value="ECO:0000266"/>
    <property type="project" value="RGD"/>
</dbReference>
<dbReference type="GO" id="GO:0008270">
    <property type="term" value="F:zinc ion binding"/>
    <property type="evidence" value="ECO:0007669"/>
    <property type="project" value="UniProtKB-KW"/>
</dbReference>
<dbReference type="GO" id="GO:0048513">
    <property type="term" value="P:animal organ development"/>
    <property type="evidence" value="ECO:0000318"/>
    <property type="project" value="GO_Central"/>
</dbReference>
<dbReference type="GO" id="GO:0090102">
    <property type="term" value="P:cochlea development"/>
    <property type="evidence" value="ECO:0000266"/>
    <property type="project" value="RGD"/>
</dbReference>
<dbReference type="GO" id="GO:0050890">
    <property type="term" value="P:cognition"/>
    <property type="evidence" value="ECO:0000266"/>
    <property type="project" value="RGD"/>
</dbReference>
<dbReference type="GO" id="GO:0042472">
    <property type="term" value="P:inner ear morphogenesis"/>
    <property type="evidence" value="ECO:0000266"/>
    <property type="project" value="RGD"/>
</dbReference>
<dbReference type="GO" id="GO:0007626">
    <property type="term" value="P:locomotory behavior"/>
    <property type="evidence" value="ECO:0000266"/>
    <property type="project" value="RGD"/>
</dbReference>
<dbReference type="GO" id="GO:0007605">
    <property type="term" value="P:sensory perception of sound"/>
    <property type="evidence" value="ECO:0000266"/>
    <property type="project" value="RGD"/>
</dbReference>
<dbReference type="InterPro" id="IPR026092">
    <property type="entry name" value="RAI2/SOBP"/>
</dbReference>
<dbReference type="InterPro" id="IPR010507">
    <property type="entry name" value="Znf_MYM"/>
</dbReference>
<dbReference type="PANTHER" id="PTHR23186">
    <property type="entry name" value="RETINOIC ACID-INDUCED PROTEIN 2"/>
    <property type="match status" value="1"/>
</dbReference>
<dbReference type="PANTHER" id="PTHR23186:SF2">
    <property type="entry name" value="SINE OCULIS-BINDING PROTEIN HOMOLOG"/>
    <property type="match status" value="1"/>
</dbReference>
<dbReference type="Pfam" id="PF15279">
    <property type="entry name" value="SOBP"/>
    <property type="match status" value="1"/>
</dbReference>
<dbReference type="Pfam" id="PF06467">
    <property type="entry name" value="zf-FCS"/>
    <property type="match status" value="1"/>
</dbReference>
<evidence type="ECO:0000250" key="1"/>
<evidence type="ECO:0000250" key="2">
    <source>
        <dbReference type="UniProtKB" id="A7XYQ1"/>
    </source>
</evidence>
<evidence type="ECO:0000250" key="3">
    <source>
        <dbReference type="UniProtKB" id="Q0P5V2"/>
    </source>
</evidence>
<evidence type="ECO:0000255" key="4"/>
<evidence type="ECO:0000256" key="5">
    <source>
        <dbReference type="SAM" id="MobiDB-lite"/>
    </source>
</evidence>
<evidence type="ECO:0000312" key="6">
    <source>
        <dbReference type="EMBL" id="ABF56058.1"/>
    </source>
</evidence>
<protein>
    <recommendedName>
        <fullName>Sine oculis-binding protein homolog</fullName>
    </recommendedName>
    <alternativeName>
        <fullName>Jackson circler protein 1</fullName>
    </alternativeName>
</protein>
<gene>
    <name evidence="3" type="primary">Sobp</name>
    <name evidence="6" type="synonym">Jxc1</name>
</gene>
<reference evidence="6" key="1">
    <citation type="submission" date="2006-04" db="EMBL/GenBank/DDBJ databases">
        <title>Mutations in Jxc1 are associated with deafness, vestibular deficits and cochlea malformation in the Jackson circler (jc) mutant mouse.</title>
        <authorList>
            <person name="Noben-Trauth K."/>
        </authorList>
    </citation>
    <scope>NUCLEOTIDE SEQUENCE [MRNA]</scope>
    <source>
        <strain evidence="6">Sprague-Dawley</strain>
    </source>
</reference>
<sequence>MAEMEKEGRPPENKRSRKPAHPVKREINEEMKNFAENTMNELLGWYGYDKVELKDGEDIEFRSYTTDGESRQHISVLKENSLPKPKLPEDSVISSYNISTGYSGLATGNGLSDSPAGSKDHGNVPIIVPLIPPPFIKPPAEDEVSNVQIMCAWCQKVGIKRYSLSMGSEVKSFCSEKCFAACRRAYFKRNKARDEDGHAESFPQQHYAKETPRLAFKNNCELLVCDWCKHIRHTKEYLDFGDGERRLQFCSAKCLNQYKMDIFYKETQANLPAGLCGTLHPHMESKAEGTGVQLLTPDSWNIPLTDARRKAPSPVAAAGQSQGPGPSSSTTVSPSDTANCSVTKIPTPVPKSLPISETPSIPPVSVQPPASIGPPLGVPPRSPPMVMTNRGPVPLPIFMEQQIIQQIRPPFIRGPPHHASNPNSPLSNPMLPGIGPPPGGPRNLGPTSSPMHRPMLSPHIHPPSTPTMPGNPPGLLPPPPPGAPLPSLPFPPVSMMPNGPMPVPQMMNFGLPSLAPLVPPPTLLVPYPVIVPLPVPIPIPIPIPHVNDSKPPNGFSSNGESFVPSAPGDSSAAGGKAGGRSLSPRDSKQGSSKSADSPPGSSGQALSLAPSERGRGEVVDLTRRAASPAGAGGQPGFAGVLHGPQDGVIDLTVGHRARLHNVIHRALHAHVKAEREPGAAERRTCGGCRDGHCSPPAAGDPGPGAPAGPEAAAACNVIVNGTRSAPAEAKGAEPPPEQPPPPAPPKKLLSPEEPAVNELESVKENNCASNCHLDGEVTKKLMGEEALAGGDKSDPNLNNPADEDHAYALRMLPKTGCVIQPVPKPAEKAAMTPCVISSPMLSAGPEDLEPPLKRRCLRIRNQNK</sequence>
<feature type="chain" id="PRO_0000312234" description="Sine oculis-binding protein homolog">
    <location>
        <begin position="1"/>
        <end position="864"/>
    </location>
</feature>
<feature type="zinc finger region" description="FCS-type 1" evidence="4">
    <location>
        <begin position="142"/>
        <end position="180"/>
    </location>
</feature>
<feature type="zinc finger region" description="FCS-type 2" evidence="4">
    <location>
        <begin position="216"/>
        <end position="256"/>
    </location>
</feature>
<feature type="region of interest" description="Disordered" evidence="5">
    <location>
        <begin position="1"/>
        <end position="25"/>
    </location>
</feature>
<feature type="region of interest" description="Disordered" evidence="5">
    <location>
        <begin position="304"/>
        <end position="360"/>
    </location>
</feature>
<feature type="region of interest" description="Disordered" evidence="5">
    <location>
        <begin position="413"/>
        <end position="484"/>
    </location>
</feature>
<feature type="region of interest" description="Disordered" evidence="5">
    <location>
        <begin position="550"/>
        <end position="616"/>
    </location>
</feature>
<feature type="region of interest" description="Disordered" evidence="5">
    <location>
        <begin position="725"/>
        <end position="750"/>
    </location>
</feature>
<feature type="short sequence motif" description="SUMO interaction motif 1 (SIM); mediates the binding to polysumoylated substrates" evidence="1">
    <location>
        <begin position="618"/>
        <end position="622"/>
    </location>
</feature>
<feature type="short sequence motif" description="SUMO interaction motif 2 (SIM); mediates the binding to polysumoylated substrates" evidence="1">
    <location>
        <begin position="648"/>
        <end position="652"/>
    </location>
</feature>
<feature type="compositionally biased region" description="Basic and acidic residues" evidence="5">
    <location>
        <begin position="1"/>
        <end position="14"/>
    </location>
</feature>
<feature type="compositionally biased region" description="Low complexity" evidence="5">
    <location>
        <begin position="314"/>
        <end position="335"/>
    </location>
</feature>
<feature type="compositionally biased region" description="Low complexity" evidence="5">
    <location>
        <begin position="417"/>
        <end position="433"/>
    </location>
</feature>
<feature type="compositionally biased region" description="Pro residues" evidence="5">
    <location>
        <begin position="460"/>
        <end position="484"/>
    </location>
</feature>
<feature type="compositionally biased region" description="Low complexity" evidence="5">
    <location>
        <begin position="565"/>
        <end position="582"/>
    </location>
</feature>
<feature type="compositionally biased region" description="Low complexity" evidence="5">
    <location>
        <begin position="590"/>
        <end position="603"/>
    </location>
</feature>
<feature type="compositionally biased region" description="Pro residues" evidence="5">
    <location>
        <begin position="733"/>
        <end position="745"/>
    </location>
</feature>
<feature type="modified residue" description="Phosphoserine" evidence="3">
    <location>
        <position position="627"/>
    </location>
</feature>
<feature type="modified residue" description="Phosphoserine" evidence="3">
    <location>
        <position position="694"/>
    </location>
</feature>
<feature type="cross-link" description="Glycyl lysine isopeptide (Lys-Gly) (interchain with G-Cter in SUMO2)" evidence="2">
    <location>
        <position position="672"/>
    </location>
</feature>
<organism>
    <name type="scientific">Rattus norvegicus</name>
    <name type="common">Rat</name>
    <dbReference type="NCBI Taxonomy" id="10116"/>
    <lineage>
        <taxon>Eukaryota</taxon>
        <taxon>Metazoa</taxon>
        <taxon>Chordata</taxon>
        <taxon>Craniata</taxon>
        <taxon>Vertebrata</taxon>
        <taxon>Euteleostomi</taxon>
        <taxon>Mammalia</taxon>
        <taxon>Eutheria</taxon>
        <taxon>Euarchontoglires</taxon>
        <taxon>Glires</taxon>
        <taxon>Rodentia</taxon>
        <taxon>Myomorpha</taxon>
        <taxon>Muroidea</taxon>
        <taxon>Muridae</taxon>
        <taxon>Murinae</taxon>
        <taxon>Rattus</taxon>
    </lineage>
</organism>
<accession>A7XYI6</accession>
<name>SOBP_RAT</name>